<reference key="1">
    <citation type="journal article" date="2004" name="Proc. Natl. Acad. Sci. U.S.A.">
        <title>The louse-borne human pathogen Bartonella quintana is a genomic derivative of the zoonotic agent Bartonella henselae.</title>
        <authorList>
            <person name="Alsmark U.C.M."/>
            <person name="Frank A.C."/>
            <person name="Karlberg E.O."/>
            <person name="Legault B.-A."/>
            <person name="Ardell D.H."/>
            <person name="Canbaeck B."/>
            <person name="Eriksson A.-S."/>
            <person name="Naeslund A.K."/>
            <person name="Handley S.A."/>
            <person name="Huvet M."/>
            <person name="La Scola B."/>
            <person name="Holmberg M."/>
            <person name="Andersson S.G.E."/>
        </authorList>
    </citation>
    <scope>NUCLEOTIDE SEQUENCE [LARGE SCALE GENOMIC DNA]</scope>
    <source>
        <strain>Toulouse</strain>
    </source>
</reference>
<sequence>MLNLYGRKFSSRLMLGTAQYPSPAILRNAIHKSNIEIVTVSLRRETAGGKQGGQFWQFLKELDITVLPNTAGCYTVKEAVTTAQLARDLFKTSWIKLEIIGNPDTLQPNVFSLIEAAQILNSDGFQIFAYTTDDLIVAERLLDVGCRVIMPWCAPIGSGQGPHNTDGLRSIRAYLPDVTLVIDAGIGRPSHAAVAMELGYDAVLLNTAVAKAGDPVLMAQAFAQAVQAGRMGYKAGILKARNIAVPSTPIVGKAVFS</sequence>
<organism>
    <name type="scientific">Bartonella quintana (strain Toulouse)</name>
    <name type="common">Rochalimaea quintana</name>
    <dbReference type="NCBI Taxonomy" id="283165"/>
    <lineage>
        <taxon>Bacteria</taxon>
        <taxon>Pseudomonadati</taxon>
        <taxon>Pseudomonadota</taxon>
        <taxon>Alphaproteobacteria</taxon>
        <taxon>Hyphomicrobiales</taxon>
        <taxon>Bartonellaceae</taxon>
        <taxon>Bartonella</taxon>
    </lineage>
</organism>
<feature type="chain" id="PRO_0000162790" description="Thiazole synthase">
    <location>
        <begin position="1"/>
        <end position="257"/>
    </location>
</feature>
<feature type="active site" description="Schiff-base intermediate with DXP" evidence="1">
    <location>
        <position position="96"/>
    </location>
</feature>
<feature type="binding site" evidence="1">
    <location>
        <position position="157"/>
    </location>
    <ligand>
        <name>1-deoxy-D-xylulose 5-phosphate</name>
        <dbReference type="ChEBI" id="CHEBI:57792"/>
    </ligand>
</feature>
<feature type="binding site" evidence="1">
    <location>
        <begin position="184"/>
        <end position="185"/>
    </location>
    <ligand>
        <name>1-deoxy-D-xylulose 5-phosphate</name>
        <dbReference type="ChEBI" id="CHEBI:57792"/>
    </ligand>
</feature>
<feature type="binding site" evidence="1">
    <location>
        <begin position="206"/>
        <end position="207"/>
    </location>
    <ligand>
        <name>1-deoxy-D-xylulose 5-phosphate</name>
        <dbReference type="ChEBI" id="CHEBI:57792"/>
    </ligand>
</feature>
<keyword id="KW-0963">Cytoplasm</keyword>
<keyword id="KW-0704">Schiff base</keyword>
<keyword id="KW-0784">Thiamine biosynthesis</keyword>
<keyword id="KW-0808">Transferase</keyword>
<comment type="function">
    <text evidence="1">Catalyzes the rearrangement of 1-deoxy-D-xylulose 5-phosphate (DXP) to produce the thiazole phosphate moiety of thiamine. Sulfur is provided by the thiocarboxylate moiety of the carrier protein ThiS. In vitro, sulfur can be provided by H(2)S.</text>
</comment>
<comment type="catalytic activity">
    <reaction evidence="1">
        <text>[ThiS sulfur-carrier protein]-C-terminal-Gly-aminoethanethioate + 2-iminoacetate + 1-deoxy-D-xylulose 5-phosphate = [ThiS sulfur-carrier protein]-C-terminal Gly-Gly + 2-[(2R,5Z)-2-carboxy-4-methylthiazol-5(2H)-ylidene]ethyl phosphate + 2 H2O + H(+)</text>
        <dbReference type="Rhea" id="RHEA:26297"/>
        <dbReference type="Rhea" id="RHEA-COMP:12909"/>
        <dbReference type="Rhea" id="RHEA-COMP:19908"/>
        <dbReference type="ChEBI" id="CHEBI:15377"/>
        <dbReference type="ChEBI" id="CHEBI:15378"/>
        <dbReference type="ChEBI" id="CHEBI:57792"/>
        <dbReference type="ChEBI" id="CHEBI:62899"/>
        <dbReference type="ChEBI" id="CHEBI:77846"/>
        <dbReference type="ChEBI" id="CHEBI:90778"/>
        <dbReference type="ChEBI" id="CHEBI:232372"/>
        <dbReference type="EC" id="2.8.1.10"/>
    </reaction>
</comment>
<comment type="pathway">
    <text evidence="1">Cofactor biosynthesis; thiamine diphosphate biosynthesis.</text>
</comment>
<comment type="subunit">
    <text evidence="1">Homotetramer. Forms heterodimers with either ThiH or ThiS.</text>
</comment>
<comment type="subcellular location">
    <subcellularLocation>
        <location evidence="1">Cytoplasm</location>
    </subcellularLocation>
</comment>
<comment type="similarity">
    <text evidence="1">Belongs to the ThiG family.</text>
</comment>
<proteinExistence type="inferred from homology"/>
<accession>Q6G0A2</accession>
<name>THIG_BARQU</name>
<gene>
    <name evidence="1" type="primary">thiG</name>
    <name type="ordered locus">BQ04080</name>
</gene>
<evidence type="ECO:0000255" key="1">
    <source>
        <dbReference type="HAMAP-Rule" id="MF_00443"/>
    </source>
</evidence>
<protein>
    <recommendedName>
        <fullName evidence="1">Thiazole synthase</fullName>
        <ecNumber evidence="1">2.8.1.10</ecNumber>
    </recommendedName>
</protein>
<dbReference type="EC" id="2.8.1.10" evidence="1"/>
<dbReference type="EMBL" id="BX897700">
    <property type="protein sequence ID" value="CAF25907.1"/>
    <property type="molecule type" value="Genomic_DNA"/>
</dbReference>
<dbReference type="RefSeq" id="WP_011179196.1">
    <property type="nucleotide sequence ID" value="NC_005955.1"/>
</dbReference>
<dbReference type="SMR" id="Q6G0A2"/>
<dbReference type="KEGG" id="bqu:BQ04080"/>
<dbReference type="eggNOG" id="COG2022">
    <property type="taxonomic scope" value="Bacteria"/>
</dbReference>
<dbReference type="HOGENOM" id="CLU_062233_1_0_5"/>
<dbReference type="OrthoDB" id="9805935at2"/>
<dbReference type="UniPathway" id="UPA00060"/>
<dbReference type="Proteomes" id="UP000000597">
    <property type="component" value="Chromosome"/>
</dbReference>
<dbReference type="GO" id="GO:0005737">
    <property type="term" value="C:cytoplasm"/>
    <property type="evidence" value="ECO:0007669"/>
    <property type="project" value="UniProtKB-SubCell"/>
</dbReference>
<dbReference type="GO" id="GO:1990107">
    <property type="term" value="F:thiazole synthase activity"/>
    <property type="evidence" value="ECO:0007669"/>
    <property type="project" value="UniProtKB-EC"/>
</dbReference>
<dbReference type="GO" id="GO:0009229">
    <property type="term" value="P:thiamine diphosphate biosynthetic process"/>
    <property type="evidence" value="ECO:0007669"/>
    <property type="project" value="UniProtKB-UniRule"/>
</dbReference>
<dbReference type="CDD" id="cd04728">
    <property type="entry name" value="ThiG"/>
    <property type="match status" value="1"/>
</dbReference>
<dbReference type="Gene3D" id="3.20.20.70">
    <property type="entry name" value="Aldolase class I"/>
    <property type="match status" value="1"/>
</dbReference>
<dbReference type="HAMAP" id="MF_00443">
    <property type="entry name" value="ThiG"/>
    <property type="match status" value="1"/>
</dbReference>
<dbReference type="InterPro" id="IPR013785">
    <property type="entry name" value="Aldolase_TIM"/>
</dbReference>
<dbReference type="InterPro" id="IPR033983">
    <property type="entry name" value="Thiazole_synthase_ThiG"/>
</dbReference>
<dbReference type="InterPro" id="IPR008867">
    <property type="entry name" value="ThiG"/>
</dbReference>
<dbReference type="PANTHER" id="PTHR34266">
    <property type="entry name" value="THIAZOLE SYNTHASE"/>
    <property type="match status" value="1"/>
</dbReference>
<dbReference type="PANTHER" id="PTHR34266:SF2">
    <property type="entry name" value="THIAZOLE SYNTHASE"/>
    <property type="match status" value="1"/>
</dbReference>
<dbReference type="Pfam" id="PF05690">
    <property type="entry name" value="ThiG"/>
    <property type="match status" value="1"/>
</dbReference>
<dbReference type="SUPFAM" id="SSF110399">
    <property type="entry name" value="ThiG-like"/>
    <property type="match status" value="1"/>
</dbReference>